<keyword id="KW-0032">Aminotransferase</keyword>
<keyword id="KW-0808">Transferase</keyword>
<accession>P64226</accession>
<accession>Q99TV7</accession>
<comment type="function">
    <text evidence="1">The glycine cleavage system catalyzes the degradation of glycine.</text>
</comment>
<comment type="catalytic activity">
    <reaction evidence="1">
        <text>N(6)-[(R)-S(8)-aminomethyldihydrolipoyl]-L-lysyl-[protein] + (6S)-5,6,7,8-tetrahydrofolate = N(6)-[(R)-dihydrolipoyl]-L-lysyl-[protein] + (6R)-5,10-methylene-5,6,7,8-tetrahydrofolate + NH4(+)</text>
        <dbReference type="Rhea" id="RHEA:16945"/>
        <dbReference type="Rhea" id="RHEA-COMP:10475"/>
        <dbReference type="Rhea" id="RHEA-COMP:10492"/>
        <dbReference type="ChEBI" id="CHEBI:15636"/>
        <dbReference type="ChEBI" id="CHEBI:28938"/>
        <dbReference type="ChEBI" id="CHEBI:57453"/>
        <dbReference type="ChEBI" id="CHEBI:83100"/>
        <dbReference type="ChEBI" id="CHEBI:83143"/>
        <dbReference type="EC" id="2.1.2.10"/>
    </reaction>
</comment>
<comment type="subunit">
    <text evidence="1">The glycine cleavage system is composed of four proteins: P, T, L and H.</text>
</comment>
<comment type="similarity">
    <text evidence="1">Belongs to the GcvT family.</text>
</comment>
<name>GCST_STAAW</name>
<feature type="chain" id="PRO_0000122600" description="Aminomethyltransferase">
    <location>
        <begin position="1"/>
        <end position="363"/>
    </location>
</feature>
<protein>
    <recommendedName>
        <fullName evidence="1">Aminomethyltransferase</fullName>
        <ecNumber evidence="1">2.1.2.10</ecNumber>
    </recommendedName>
    <alternativeName>
        <fullName evidence="1">Glycine cleavage system T protein</fullName>
    </alternativeName>
</protein>
<dbReference type="EC" id="2.1.2.10" evidence="1"/>
<dbReference type="EMBL" id="BA000033">
    <property type="protein sequence ID" value="BAB95354.1"/>
    <property type="molecule type" value="Genomic_DNA"/>
</dbReference>
<dbReference type="RefSeq" id="WP_000093349.1">
    <property type="nucleotide sequence ID" value="NC_003923.1"/>
</dbReference>
<dbReference type="SMR" id="P64226"/>
<dbReference type="KEGG" id="sam:MW1489"/>
<dbReference type="HOGENOM" id="CLU_007884_10_2_9"/>
<dbReference type="GO" id="GO:0005829">
    <property type="term" value="C:cytosol"/>
    <property type="evidence" value="ECO:0007669"/>
    <property type="project" value="TreeGrafter"/>
</dbReference>
<dbReference type="GO" id="GO:0005960">
    <property type="term" value="C:glycine cleavage complex"/>
    <property type="evidence" value="ECO:0007669"/>
    <property type="project" value="InterPro"/>
</dbReference>
<dbReference type="GO" id="GO:0004047">
    <property type="term" value="F:aminomethyltransferase activity"/>
    <property type="evidence" value="ECO:0007669"/>
    <property type="project" value="UniProtKB-UniRule"/>
</dbReference>
<dbReference type="GO" id="GO:0008483">
    <property type="term" value="F:transaminase activity"/>
    <property type="evidence" value="ECO:0007669"/>
    <property type="project" value="UniProtKB-KW"/>
</dbReference>
<dbReference type="GO" id="GO:0019464">
    <property type="term" value="P:glycine decarboxylation via glycine cleavage system"/>
    <property type="evidence" value="ECO:0007669"/>
    <property type="project" value="UniProtKB-UniRule"/>
</dbReference>
<dbReference type="FunFam" id="2.40.30.110:FF:000007">
    <property type="entry name" value="Aminomethyltransferase"/>
    <property type="match status" value="1"/>
</dbReference>
<dbReference type="FunFam" id="3.30.70.1400:FF:000001">
    <property type="entry name" value="Aminomethyltransferase"/>
    <property type="match status" value="1"/>
</dbReference>
<dbReference type="FunFam" id="4.10.1250.10:FF:000001">
    <property type="entry name" value="Aminomethyltransferase"/>
    <property type="match status" value="1"/>
</dbReference>
<dbReference type="Gene3D" id="2.40.30.110">
    <property type="entry name" value="Aminomethyltransferase beta-barrel domains"/>
    <property type="match status" value="1"/>
</dbReference>
<dbReference type="Gene3D" id="3.30.70.1400">
    <property type="entry name" value="Aminomethyltransferase beta-barrel domains"/>
    <property type="match status" value="1"/>
</dbReference>
<dbReference type="Gene3D" id="4.10.1250.10">
    <property type="entry name" value="Aminomethyltransferase fragment"/>
    <property type="match status" value="1"/>
</dbReference>
<dbReference type="Gene3D" id="3.30.1360.120">
    <property type="entry name" value="Probable tRNA modification gtpase trme, domain 1"/>
    <property type="match status" value="1"/>
</dbReference>
<dbReference type="HAMAP" id="MF_00259">
    <property type="entry name" value="GcvT"/>
    <property type="match status" value="1"/>
</dbReference>
<dbReference type="InterPro" id="IPR006223">
    <property type="entry name" value="GCS_T"/>
</dbReference>
<dbReference type="InterPro" id="IPR022903">
    <property type="entry name" value="GCS_T_bac"/>
</dbReference>
<dbReference type="InterPro" id="IPR013977">
    <property type="entry name" value="GCST_C"/>
</dbReference>
<dbReference type="InterPro" id="IPR006222">
    <property type="entry name" value="GCV_T_N"/>
</dbReference>
<dbReference type="InterPro" id="IPR028896">
    <property type="entry name" value="GcvT/YgfZ/DmdA"/>
</dbReference>
<dbReference type="InterPro" id="IPR029043">
    <property type="entry name" value="GcvT/YgfZ_C"/>
</dbReference>
<dbReference type="InterPro" id="IPR027266">
    <property type="entry name" value="TrmE/GcvT_dom1"/>
</dbReference>
<dbReference type="NCBIfam" id="TIGR00528">
    <property type="entry name" value="gcvT"/>
    <property type="match status" value="1"/>
</dbReference>
<dbReference type="NCBIfam" id="NF001567">
    <property type="entry name" value="PRK00389.1"/>
    <property type="match status" value="1"/>
</dbReference>
<dbReference type="PANTHER" id="PTHR43757">
    <property type="entry name" value="AMINOMETHYLTRANSFERASE"/>
    <property type="match status" value="1"/>
</dbReference>
<dbReference type="PANTHER" id="PTHR43757:SF2">
    <property type="entry name" value="AMINOMETHYLTRANSFERASE, MITOCHONDRIAL"/>
    <property type="match status" value="1"/>
</dbReference>
<dbReference type="Pfam" id="PF01571">
    <property type="entry name" value="GCV_T"/>
    <property type="match status" value="1"/>
</dbReference>
<dbReference type="Pfam" id="PF08669">
    <property type="entry name" value="GCV_T_C"/>
    <property type="match status" value="1"/>
</dbReference>
<dbReference type="PIRSF" id="PIRSF006487">
    <property type="entry name" value="GcvT"/>
    <property type="match status" value="1"/>
</dbReference>
<dbReference type="SUPFAM" id="SSF101790">
    <property type="entry name" value="Aminomethyltransferase beta-barrel domain"/>
    <property type="match status" value="1"/>
</dbReference>
<dbReference type="SUPFAM" id="SSF103025">
    <property type="entry name" value="Folate-binding domain"/>
    <property type="match status" value="1"/>
</dbReference>
<proteinExistence type="inferred from homology"/>
<reference key="1">
    <citation type="journal article" date="2002" name="Lancet">
        <title>Genome and virulence determinants of high virulence community-acquired MRSA.</title>
        <authorList>
            <person name="Baba T."/>
            <person name="Takeuchi F."/>
            <person name="Kuroda M."/>
            <person name="Yuzawa H."/>
            <person name="Aoki K."/>
            <person name="Oguchi A."/>
            <person name="Nagai Y."/>
            <person name="Iwama N."/>
            <person name="Asano K."/>
            <person name="Naimi T."/>
            <person name="Kuroda H."/>
            <person name="Cui L."/>
            <person name="Yamamoto K."/>
            <person name="Hiramatsu K."/>
        </authorList>
    </citation>
    <scope>NUCLEOTIDE SEQUENCE [LARGE SCALE GENOMIC DNA]</scope>
    <source>
        <strain>MW2</strain>
    </source>
</reference>
<evidence type="ECO:0000255" key="1">
    <source>
        <dbReference type="HAMAP-Rule" id="MF_00259"/>
    </source>
</evidence>
<sequence length="363" mass="40458">MSSDLKQTPLYQNYVDRGAKIVEFGGWAMPVQFSSIKEEHNAVRYEIGLFDVSHMGEIEVTGKDASQFVQYLLSNDTDNLTTSKALYTALCNEEGGIIDDLVIYKLADDNYLLVVNAANTEKDFNWILKHKEKFDVEVQNVSNQYGQLAIQGPKARDLINQLVDEDVTEMKMFEFKQGVKLFGANVILSQSGYTGEDGFEIYCNIDDTEKIWDGLLEYNVMPCGLGARDTLRLEAGLPLHGQDLTESITPYEGGIAFASKPLIDADFIGKSVLKDQKENGAPRRTVGLELLEKGIARTGYEVMDLDGNIIGEVTSGTQSPSSGKSIALAMIKRDEFEMGRELLVQVRKRQLKAKIVKKNQIDK</sequence>
<gene>
    <name evidence="1" type="primary">gcvT</name>
    <name type="ordered locus">MW1489</name>
</gene>
<organism>
    <name type="scientific">Staphylococcus aureus (strain MW2)</name>
    <dbReference type="NCBI Taxonomy" id="196620"/>
    <lineage>
        <taxon>Bacteria</taxon>
        <taxon>Bacillati</taxon>
        <taxon>Bacillota</taxon>
        <taxon>Bacilli</taxon>
        <taxon>Bacillales</taxon>
        <taxon>Staphylococcaceae</taxon>
        <taxon>Staphylococcus</taxon>
    </lineage>
</organism>